<reference key="1">
    <citation type="journal article" date="1988" name="Biochim. Biophys. Acta">
        <title>Nucleotide sequence of a cDNA clone encoding mouse transition protein 1.</title>
        <authorList>
            <person name="Kleene K.C."/>
            <person name="Borzorgzadeh A."/>
            <person name="Flynn J.F."/>
            <person name="Yelick P.C."/>
            <person name="Hecht N.B."/>
        </authorList>
    </citation>
    <scope>NUCLEOTIDE SEQUENCE [MRNA]</scope>
    <scope>TISSUE SPECIFICITY</scope>
    <source>
        <tissue>Testis</tissue>
    </source>
</reference>
<reference key="2">
    <citation type="journal article" date="1991" name="Genomics">
        <title>The mouse transition protein 1 gene contains a B1 repetitive element and is located on chromosome 1.</title>
        <authorList>
            <person name="Yelick P.C."/>
            <person name="Kozak C."/>
            <person name="Kwon Y.K."/>
            <person name="Seldin M.F."/>
            <person name="Hecht N.B."/>
        </authorList>
    </citation>
    <scope>NUCLEOTIDE SEQUENCE [GENOMIC DNA]</scope>
</reference>
<reference key="3">
    <citation type="journal article" date="2004" name="Genome Res.">
        <title>The status, quality, and expansion of the NIH full-length cDNA project: the Mammalian Gene Collection (MGC).</title>
        <authorList>
            <consortium name="The MGC Project Team"/>
        </authorList>
    </citation>
    <scope>NUCLEOTIDE SEQUENCE [LARGE SCALE MRNA]</scope>
    <source>
        <tissue>Testis</tissue>
    </source>
</reference>
<reference key="4">
    <citation type="journal article" date="2000" name="Proc. Natl. Acad. Sci. U.S.A.">
        <title>Abnormal spermatogenesis and reduced fertility in transition nuclear protein 1-deficient mice.</title>
        <authorList>
            <person name="Yu Y.E."/>
            <person name="Zhang Y."/>
            <person name="Unni E."/>
            <person name="Shirley C.R."/>
            <person name="Deng J.M."/>
            <person name="Russell L.D."/>
            <person name="Weil M.M."/>
            <person name="Behringer R.R."/>
            <person name="Meistrich M.L."/>
        </authorList>
    </citation>
    <scope>FUNCTION</scope>
    <scope>DISRUPTION PHENOTYPE</scope>
</reference>
<reference key="5">
    <citation type="journal article" date="2004" name="Biol. Reprod.">
        <title>Nucleoprotein transitions during spermiogenesis in mice with transition nuclear protein Tnp1 and Tnp2 mutations.</title>
        <authorList>
            <person name="Zhao M."/>
            <person name="Shirley C.R."/>
            <person name="Mounsey S."/>
            <person name="Meistrich M.L."/>
        </authorList>
    </citation>
    <scope>FUNCTION</scope>
    <scope>SUBCELLULAR LOCATION</scope>
    <scope>DISRUPTION PHENOTYPE</scope>
    <scope>DEVELOPMENTAL STAGE</scope>
</reference>
<reference key="6">
    <citation type="journal article" date="2004" name="Biol. Reprod.">
        <title>Abnormalities and reduced reproductive potential of sperm from Tnp1- and Tnp2-null double mutant mice.</title>
        <authorList>
            <person name="Shirley C.R."/>
            <person name="Hayashi S."/>
            <person name="Mounsey S."/>
            <person name="Yanagimachi R."/>
            <person name="Meistrich M.L."/>
        </authorList>
    </citation>
    <scope>FUNCTION</scope>
    <scope>DISRUPTION PHENOTYPE</scope>
</reference>
<reference key="7">
    <citation type="journal article" date="2004" name="Genesis">
        <title>Transition nuclear proteins are required for normal chromatin condensation and functional sperm development.</title>
        <authorList>
            <person name="Zhao M."/>
            <person name="Shirley C.R."/>
            <person name="Hayashi S."/>
            <person name="Marcon L."/>
            <person name="Mohapatra B."/>
            <person name="Suganuma R."/>
            <person name="Behringer R.R."/>
            <person name="Boissonneault G."/>
            <person name="Yanagimachi R."/>
            <person name="Meistrich M.L."/>
        </authorList>
    </citation>
    <scope>FUNCTION</scope>
    <scope>DISRUPTION PHENOTYPE</scope>
</reference>
<reference key="8">
    <citation type="journal article" date="2017" name="Mol. Cell">
        <title>Histone variant H2A.L.2 guides transition protein-dependent protamine assembly in male germ cells.</title>
        <authorList>
            <person name="Barral S."/>
            <person name="Morozumi Y."/>
            <person name="Tanaka H."/>
            <person name="Montellier E."/>
            <person name="Govin J."/>
            <person name="de Dieuleveult M."/>
            <person name="Charbonnier G."/>
            <person name="Coute Y."/>
            <person name="Puthier D."/>
            <person name="Buchou T."/>
            <person name="Boussouar F."/>
            <person name="Urahama T."/>
            <person name="Fenaille F."/>
            <person name="Curtet S."/>
            <person name="Hery P."/>
            <person name="Fernandez-Nunez N."/>
            <person name="Shiota H."/>
            <person name="Gerard M."/>
            <person name="Rousseaux S."/>
            <person name="Kurumizaka H."/>
            <person name="Khochbin S."/>
        </authorList>
    </citation>
    <scope>FUNCTION</scope>
    <scope>SUBCELLULAR LOCATION</scope>
</reference>
<name>STP1_MOUSE</name>
<proteinExistence type="evidence at transcript level"/>
<dbReference type="EMBL" id="X12521">
    <property type="protein sequence ID" value="CAA31039.1"/>
    <property type="molecule type" value="mRNA"/>
</dbReference>
<dbReference type="EMBL" id="S80846">
    <property type="protein sequence ID" value="AAB21244.2"/>
    <property type="molecule type" value="Genomic_DNA"/>
</dbReference>
<dbReference type="EMBL" id="BC048494">
    <property type="protein sequence ID" value="AAH48494.1"/>
    <property type="molecule type" value="mRNA"/>
</dbReference>
<dbReference type="EMBL" id="BC061170">
    <property type="protein sequence ID" value="AAH61170.1"/>
    <property type="molecule type" value="mRNA"/>
</dbReference>
<dbReference type="CCDS" id="CCDS35611.1"/>
<dbReference type="PIR" id="A40561">
    <property type="entry name" value="BGMS"/>
</dbReference>
<dbReference type="RefSeq" id="NP_033433.1">
    <property type="nucleotide sequence ID" value="NM_009407.2"/>
</dbReference>
<dbReference type="SMR" id="P10856"/>
<dbReference type="FunCoup" id="P10856">
    <property type="interactions" value="216"/>
</dbReference>
<dbReference type="STRING" id="10090.ENSMUSP00000027374"/>
<dbReference type="iPTMnet" id="P10856"/>
<dbReference type="PhosphoSitePlus" id="P10856"/>
<dbReference type="PaxDb" id="10090-ENSMUSP00000027374"/>
<dbReference type="Antibodypedia" id="34246">
    <property type="antibodies" value="120 antibodies from 23 providers"/>
</dbReference>
<dbReference type="DNASU" id="21958"/>
<dbReference type="Ensembl" id="ENSMUST00000027374.7">
    <property type="protein sequence ID" value="ENSMUSP00000027374.6"/>
    <property type="gene ID" value="ENSMUSG00000026182.7"/>
</dbReference>
<dbReference type="GeneID" id="21958"/>
<dbReference type="KEGG" id="mmu:21958"/>
<dbReference type="UCSC" id="uc007bkz.2">
    <property type="organism name" value="mouse"/>
</dbReference>
<dbReference type="AGR" id="MGI:98784"/>
<dbReference type="CTD" id="7141"/>
<dbReference type="MGI" id="MGI:98784">
    <property type="gene designation" value="Tnp1"/>
</dbReference>
<dbReference type="VEuPathDB" id="HostDB:ENSMUSG00000026182"/>
<dbReference type="eggNOG" id="ENOG502TKT1">
    <property type="taxonomic scope" value="Eukaryota"/>
</dbReference>
<dbReference type="GeneTree" id="ENSGT00390000000539"/>
<dbReference type="HOGENOM" id="CLU_3019482_0_0_1"/>
<dbReference type="InParanoid" id="P10856"/>
<dbReference type="OMA" id="FKSHGMR"/>
<dbReference type="PhylomeDB" id="P10856"/>
<dbReference type="TreeFam" id="TF338391"/>
<dbReference type="BioGRID-ORCS" id="21958">
    <property type="hits" value="1 hit in 76 CRISPR screens"/>
</dbReference>
<dbReference type="ChiTaRS" id="Tnp1">
    <property type="organism name" value="mouse"/>
</dbReference>
<dbReference type="PRO" id="PR:P10856"/>
<dbReference type="Proteomes" id="UP000000589">
    <property type="component" value="Chromosome 1"/>
</dbReference>
<dbReference type="RNAct" id="P10856">
    <property type="molecule type" value="protein"/>
</dbReference>
<dbReference type="Bgee" id="ENSMUSG00000026182">
    <property type="expression patterns" value="Expressed in seminiferous tubule of testis and 90 other cell types or tissues"/>
</dbReference>
<dbReference type="ExpressionAtlas" id="P10856">
    <property type="expression patterns" value="baseline and differential"/>
</dbReference>
<dbReference type="GO" id="GO:0001673">
    <property type="term" value="C:male germ cell nucleus"/>
    <property type="evidence" value="ECO:0000304"/>
    <property type="project" value="MGI"/>
</dbReference>
<dbReference type="GO" id="GO:0000786">
    <property type="term" value="C:nucleosome"/>
    <property type="evidence" value="ECO:0000314"/>
    <property type="project" value="UniProtKB"/>
</dbReference>
<dbReference type="GO" id="GO:0005634">
    <property type="term" value="C:nucleus"/>
    <property type="evidence" value="ECO:0000314"/>
    <property type="project" value="UniProtKB"/>
</dbReference>
<dbReference type="GO" id="GO:0003677">
    <property type="term" value="F:DNA binding"/>
    <property type="evidence" value="ECO:0000250"/>
    <property type="project" value="UniProtKB"/>
</dbReference>
<dbReference type="GO" id="GO:0006338">
    <property type="term" value="P:chromatin remodeling"/>
    <property type="evidence" value="ECO:0000250"/>
    <property type="project" value="UniProtKB"/>
</dbReference>
<dbReference type="GO" id="GO:0030317">
    <property type="term" value="P:flagellated sperm motility"/>
    <property type="evidence" value="ECO:0000250"/>
    <property type="project" value="UniProtKB"/>
</dbReference>
<dbReference type="GO" id="GO:0031507">
    <property type="term" value="P:heterochromatin formation"/>
    <property type="evidence" value="ECO:0000250"/>
    <property type="project" value="UniProtKB"/>
</dbReference>
<dbReference type="GO" id="GO:0045892">
    <property type="term" value="P:negative regulation of DNA-templated transcription"/>
    <property type="evidence" value="ECO:0000250"/>
    <property type="project" value="UniProtKB"/>
</dbReference>
<dbReference type="GO" id="GO:0006337">
    <property type="term" value="P:nucleosome disassembly"/>
    <property type="evidence" value="ECO:0000250"/>
    <property type="project" value="UniProtKB"/>
</dbReference>
<dbReference type="GO" id="GO:0010954">
    <property type="term" value="P:positive regulation of protein processing"/>
    <property type="evidence" value="ECO:0000315"/>
    <property type="project" value="UniProtKB"/>
</dbReference>
<dbReference type="GO" id="GO:0019953">
    <property type="term" value="P:sexual reproduction"/>
    <property type="evidence" value="ECO:0000250"/>
    <property type="project" value="UniProtKB"/>
</dbReference>
<dbReference type="GO" id="GO:0000012">
    <property type="term" value="P:single strand break repair"/>
    <property type="evidence" value="ECO:0000250"/>
    <property type="project" value="UniProtKB"/>
</dbReference>
<dbReference type="GO" id="GO:0035092">
    <property type="term" value="P:sperm DNA condensation"/>
    <property type="evidence" value="ECO:0000315"/>
    <property type="project" value="UniProtKB"/>
</dbReference>
<dbReference type="GO" id="GO:0007286">
    <property type="term" value="P:spermatid development"/>
    <property type="evidence" value="ECO:0000250"/>
    <property type="project" value="UniProtKB"/>
</dbReference>
<dbReference type="GO" id="GO:0007290">
    <property type="term" value="P:spermatid nucleus elongation"/>
    <property type="evidence" value="ECO:0000250"/>
    <property type="project" value="UniProtKB"/>
</dbReference>
<dbReference type="GO" id="GO:0007283">
    <property type="term" value="P:spermatogenesis"/>
    <property type="evidence" value="ECO:0000315"/>
    <property type="project" value="MGI"/>
</dbReference>
<dbReference type="InterPro" id="IPR001319">
    <property type="entry name" value="Nuclear_transition_prot1"/>
</dbReference>
<dbReference type="InterPro" id="IPR020062">
    <property type="entry name" value="Nuclear_transition_prot1_CS"/>
</dbReference>
<dbReference type="PANTHER" id="PTHR17486">
    <property type="entry name" value="SPERMATID NUCLEAR TRANSITION PROTEIN 1"/>
    <property type="match status" value="1"/>
</dbReference>
<dbReference type="PANTHER" id="PTHR17486:SF0">
    <property type="entry name" value="SPERMATID NUCLEAR TRANSITION PROTEIN 1"/>
    <property type="match status" value="1"/>
</dbReference>
<dbReference type="Pfam" id="PF02079">
    <property type="entry name" value="TP1"/>
    <property type="match status" value="1"/>
</dbReference>
<dbReference type="PROSITE" id="PS00541">
    <property type="entry name" value="TP1"/>
    <property type="match status" value="1"/>
</dbReference>
<sequence>MSTSRKLKTHGMRRGKNRAPHKGVKRGGSKRKYRKSVLKSRKRGDDASRNYRSHL</sequence>
<evidence type="ECO:0000250" key="1">
    <source>
        <dbReference type="UniProtKB" id="P22613"/>
    </source>
</evidence>
<evidence type="ECO:0000256" key="2">
    <source>
        <dbReference type="SAM" id="MobiDB-lite"/>
    </source>
</evidence>
<evidence type="ECO:0000269" key="3">
    <source>
    </source>
</evidence>
<evidence type="ECO:0000269" key="4">
    <source>
    </source>
</evidence>
<evidence type="ECO:0000269" key="5">
    <source>
    </source>
</evidence>
<evidence type="ECO:0000269" key="6">
    <source>
    </source>
</evidence>
<evidence type="ECO:0000269" key="7">
    <source>
    </source>
</evidence>
<evidence type="ECO:0000269" key="8">
    <source>
    </source>
</evidence>
<evidence type="ECO:0000305" key="9"/>
<evidence type="ECO:0000312" key="10">
    <source>
        <dbReference type="MGI" id="MGI:98784"/>
    </source>
</evidence>
<feature type="chain" id="PRO_0000191418" description="Spermatid nuclear transition protein 1">
    <location>
        <begin position="1"/>
        <end position="55"/>
    </location>
</feature>
<feature type="region of interest" description="Disordered" evidence="2">
    <location>
        <begin position="1"/>
        <end position="55"/>
    </location>
</feature>
<feature type="compositionally biased region" description="Basic residues" evidence="2">
    <location>
        <begin position="1"/>
        <end position="42"/>
    </location>
</feature>
<feature type="modified residue" description="Phosphoserine" evidence="1">
    <location>
        <position position="36"/>
    </location>
</feature>
<feature type="modified residue" description="Phosphoserine" evidence="1">
    <location>
        <position position="40"/>
    </location>
</feature>
<accession>P10856</accession>
<organism>
    <name type="scientific">Mus musculus</name>
    <name type="common">Mouse</name>
    <dbReference type="NCBI Taxonomy" id="10090"/>
    <lineage>
        <taxon>Eukaryota</taxon>
        <taxon>Metazoa</taxon>
        <taxon>Chordata</taxon>
        <taxon>Craniata</taxon>
        <taxon>Vertebrata</taxon>
        <taxon>Euteleostomi</taxon>
        <taxon>Mammalia</taxon>
        <taxon>Eutheria</taxon>
        <taxon>Euarchontoglires</taxon>
        <taxon>Glires</taxon>
        <taxon>Rodentia</taxon>
        <taxon>Myomorpha</taxon>
        <taxon>Muroidea</taxon>
        <taxon>Muridae</taxon>
        <taxon>Murinae</taxon>
        <taxon>Mus</taxon>
        <taxon>Mus</taxon>
    </lineage>
</organism>
<gene>
    <name evidence="10" type="primary">Tnp1</name>
</gene>
<protein>
    <recommendedName>
        <fullName>Spermatid nuclear transition protein 1</fullName>
        <shortName>STP-1</shortName>
        <shortName>TP-1</shortName>
    </recommendedName>
</protein>
<keyword id="KW-0158">Chromosome</keyword>
<keyword id="KW-0217">Developmental protein</keyword>
<keyword id="KW-0221">Differentiation</keyword>
<keyword id="KW-0238">DNA-binding</keyword>
<keyword id="KW-0544">Nucleosome core</keyword>
<keyword id="KW-0539">Nucleus</keyword>
<keyword id="KW-0597">Phosphoprotein</keyword>
<keyword id="KW-1185">Reference proteome</keyword>
<keyword id="KW-0744">Spermatogenesis</keyword>
<comment type="function">
    <text evidence="3 4 5 6 7">Plays a key role in the replacement of histones to protamine in the elongating spermatids of mammals (PubMed:10781074, PubMed:15083521, PubMed:15163613, PubMed:15189834, PubMed:28366643). In condensing spermatids, loaded onto the nucleosomes, where it promotes the recruitment and processing of protamines, which are responsible for histone eviction (PubMed:28366643). The histone H2AB1-H2BC1/TH2B dimer is required for loading of TNP1 onto chromatin (PubMed:28366643).</text>
</comment>
<comment type="subcellular location">
    <subcellularLocation>
        <location evidence="5">Nucleus</location>
    </subcellularLocation>
    <subcellularLocation>
        <location evidence="7">Chromosome</location>
    </subcellularLocation>
    <text evidence="7">Loaded onto the nucleosomes of condensing spermatids (PubMed:28366643). Inclusion of the H2AB1-H2BC1/TH2B dimer into chromatin opens the nucleosomes, releasing the nucleosomal DNA ends and allowing the invasion of nucleosomes by transition protein TNP1 (PubMed:28366643).</text>
</comment>
<comment type="tissue specificity">
    <text evidence="8">Testis-specific.</text>
</comment>
<comment type="developmental stage">
    <text evidence="5 7">Appears in elongating/condensing spermatids when histones are still detectable (PubMed:15163613). Coexpressed with H2ab1 during late spermiogenesis (PubMed:28366643).</text>
</comment>
<comment type="disruption phenotype">
    <text evidence="3 4 5 6">Reduced fertility in males (PubMed:10781074). Testis weights and sperm production are normal but sperm motility is severely reduced (PubMed:10781074). A significant proportion of Prm2 remains unprocessed (PubMed:10781074, PubMed:15083521, PubMed:15163613, PubMed:15189834). Male mice lacking both Tnp1 and Tnp2 are completely infertile, but protamine alone are capable of histone eviction (PubMed:15083521, PubMed:15163613, PubMed:15189834). Chromatin in mature spermatozoa shows defects in density (PubMed:15083521, PubMed:15189834).</text>
</comment>
<comment type="similarity">
    <text evidence="9">Belongs to the nuclear transition protein 1 family.</text>
</comment>